<dbReference type="EMBL" id="U00089">
    <property type="protein sequence ID" value="AAB96219.1"/>
    <property type="molecule type" value="Genomic_DNA"/>
</dbReference>
<dbReference type="PIR" id="S73897">
    <property type="entry name" value="S73897"/>
</dbReference>
<dbReference type="RefSeq" id="NP_109950.1">
    <property type="nucleotide sequence ID" value="NC_000912.1"/>
</dbReference>
<dbReference type="RefSeq" id="WP_010874619.1">
    <property type="nucleotide sequence ID" value="NZ_OU342337.1"/>
</dbReference>
<dbReference type="SMR" id="P75513"/>
<dbReference type="IntAct" id="P75513">
    <property type="interactions" value="1"/>
</dbReference>
<dbReference type="STRING" id="272634.MPN_262"/>
<dbReference type="EnsemblBacteria" id="AAB96219">
    <property type="protein sequence ID" value="AAB96219"/>
    <property type="gene ID" value="MPN_262"/>
</dbReference>
<dbReference type="KEGG" id="mpn:MPN_262"/>
<dbReference type="PATRIC" id="fig|272634.6.peg.281"/>
<dbReference type="HOGENOM" id="CLU_579799_0_0_14"/>
<dbReference type="OrthoDB" id="9981746at2"/>
<dbReference type="BioCyc" id="MPNE272634:G1GJ3-413-MONOMER"/>
<dbReference type="Proteomes" id="UP000000808">
    <property type="component" value="Chromosome"/>
</dbReference>
<dbReference type="GO" id="GO:0016020">
    <property type="term" value="C:membrane"/>
    <property type="evidence" value="ECO:0007669"/>
    <property type="project" value="UniProtKB-SubCell"/>
</dbReference>
<dbReference type="NCBIfam" id="NF045745">
    <property type="entry name" value="MPN262"/>
    <property type="match status" value="1"/>
</dbReference>
<comment type="subcellular location">
    <subcellularLocation>
        <location evidence="2">Membrane</location>
        <topology evidence="2">Single-pass membrane protein</topology>
    </subcellularLocation>
</comment>
<feature type="chain" id="PRO_0000210428" description="Uncharacterized protein MG123 homolog">
    <location>
        <begin position="1"/>
        <end position="475"/>
    </location>
</feature>
<feature type="transmembrane region" description="Helical" evidence="1">
    <location>
        <begin position="19"/>
        <end position="39"/>
    </location>
</feature>
<accession>P75513</accession>
<gene>
    <name type="ordered locus">MPN_262</name>
    <name type="ORF">A65_orf475</name>
    <name type="ORF">MP571</name>
</gene>
<keyword id="KW-0472">Membrane</keyword>
<keyword id="KW-1185">Reference proteome</keyword>
<keyword id="KW-0812">Transmembrane</keyword>
<keyword id="KW-1133">Transmembrane helix</keyword>
<protein>
    <recommendedName>
        <fullName>Uncharacterized protein MG123 homolog</fullName>
    </recommendedName>
</protein>
<sequence>MLASLTSRSATSFSIIWALVSAILILSILIWLIITIFFAWNLHLKNNKKRTKYHLEPEQIKHKIIQNKTKLGKMLDFYQQQINTTATELKWLDGQFQQIDETDKKKAHQIAIRLARNQLLQQLSVKLDQKQFSQRANNELQKLKLSNLESFTNQKIKWDQEGMKSAVSRVTINEWTFNHFAGKNRVYWDYFKQVCDVDCSIKPLKDQLEITFSSWSLLKRLQAKNLFNKLIAQSSSVKMSEKLINNALQLVQDNLALQASESGNKLLKEFELSCTNTQLVQLLGFQQFYFGTNLLSLLDLSRSIAVLVRFLNEHCKWELNERLLVETALFNNLQWVNNNDFFLKSHNDLKQLHLSAEQLAIIEQQNRPFYIDAYALLIAGVKQMLMEHDAVEPKQIHFHNAKKVMESFQLFGIDQLALIEYNNCLYGFVTTKLYEIKQLDDLALFKVLFKSFLNKHLKQKFATISLFVNTQTLMI</sequence>
<proteinExistence type="predicted"/>
<reference key="1">
    <citation type="journal article" date="1996" name="Nucleic Acids Res.">
        <title>Complete sequence analysis of the genome of the bacterium Mycoplasma pneumoniae.</title>
        <authorList>
            <person name="Himmelreich R."/>
            <person name="Hilbert H."/>
            <person name="Plagens H."/>
            <person name="Pirkl E."/>
            <person name="Li B.-C."/>
            <person name="Herrmann R."/>
        </authorList>
    </citation>
    <scope>NUCLEOTIDE SEQUENCE [LARGE SCALE GENOMIC DNA]</scope>
    <source>
        <strain>ATCC 29342 / M129 / Subtype 1</strain>
    </source>
</reference>
<name>Y262_MYCPN</name>
<evidence type="ECO:0000255" key="1"/>
<evidence type="ECO:0000305" key="2"/>
<organism>
    <name type="scientific">Mycoplasma pneumoniae (strain ATCC 29342 / M129 / Subtype 1)</name>
    <name type="common">Mycoplasmoides pneumoniae</name>
    <dbReference type="NCBI Taxonomy" id="272634"/>
    <lineage>
        <taxon>Bacteria</taxon>
        <taxon>Bacillati</taxon>
        <taxon>Mycoplasmatota</taxon>
        <taxon>Mycoplasmoidales</taxon>
        <taxon>Mycoplasmoidaceae</taxon>
        <taxon>Mycoplasmoides</taxon>
    </lineage>
</organism>